<protein>
    <recommendedName>
        <fullName evidence="2">HTH-type transcriptional regulator BetI</fullName>
    </recommendedName>
</protein>
<evidence type="ECO:0000250" key="1"/>
<evidence type="ECO:0000255" key="2">
    <source>
        <dbReference type="HAMAP-Rule" id="MF_00768"/>
    </source>
</evidence>
<proteinExistence type="inferred from homology"/>
<keyword id="KW-0238">DNA-binding</keyword>
<keyword id="KW-0678">Repressor</keyword>
<keyword id="KW-0804">Transcription</keyword>
<keyword id="KW-0805">Transcription regulation</keyword>
<sequence>MPKVGMREIRRAQLIDATLRSIDEAGLPGTTLASVAQRANISTGIVSHYFGDKDGLLEATMRHVLRDLWAATTQRRVAARKDPRSRLRAIVAANFDDTQVSAPVMKTWLAFWSQSMHDAMLKRLQHVNTRRLHSNLCAEFAKALPRAKARQAASGLAALIDGLWLRGALAGGPIDTRAALKLAHDYIDLLLASD</sequence>
<dbReference type="EMBL" id="CP001026">
    <property type="protein sequence ID" value="ACB67481.1"/>
    <property type="molecule type" value="Genomic_DNA"/>
</dbReference>
<dbReference type="RefSeq" id="WP_011659481.1">
    <property type="nucleotide sequence ID" value="NC_010552.1"/>
</dbReference>
<dbReference type="SMR" id="B1Z032"/>
<dbReference type="GeneID" id="93087470"/>
<dbReference type="KEGG" id="bac:BamMC406_5035"/>
<dbReference type="HOGENOM" id="CLU_069356_15_4_4"/>
<dbReference type="OrthoDB" id="7618612at2"/>
<dbReference type="UniPathway" id="UPA00529"/>
<dbReference type="Proteomes" id="UP000001680">
    <property type="component" value="Chromosome 2"/>
</dbReference>
<dbReference type="GO" id="GO:0003700">
    <property type="term" value="F:DNA-binding transcription factor activity"/>
    <property type="evidence" value="ECO:0007669"/>
    <property type="project" value="UniProtKB-UniRule"/>
</dbReference>
<dbReference type="GO" id="GO:0000976">
    <property type="term" value="F:transcription cis-regulatory region binding"/>
    <property type="evidence" value="ECO:0007669"/>
    <property type="project" value="TreeGrafter"/>
</dbReference>
<dbReference type="GO" id="GO:0019285">
    <property type="term" value="P:glycine betaine biosynthetic process from choline"/>
    <property type="evidence" value="ECO:0007669"/>
    <property type="project" value="UniProtKB-UniRule"/>
</dbReference>
<dbReference type="GO" id="GO:0045892">
    <property type="term" value="P:negative regulation of DNA-templated transcription"/>
    <property type="evidence" value="ECO:0007669"/>
    <property type="project" value="UniProtKB-UniRule"/>
</dbReference>
<dbReference type="Gene3D" id="1.10.357.10">
    <property type="entry name" value="Tetracycline Repressor, domain 2"/>
    <property type="match status" value="1"/>
</dbReference>
<dbReference type="HAMAP" id="MF_00768">
    <property type="entry name" value="HTH_type_BetI"/>
    <property type="match status" value="1"/>
</dbReference>
<dbReference type="InterPro" id="IPR039538">
    <property type="entry name" value="BetI_C"/>
</dbReference>
<dbReference type="InterPro" id="IPR023772">
    <property type="entry name" value="DNA-bd_HTH_TetR-type_CS"/>
</dbReference>
<dbReference type="InterPro" id="IPR009057">
    <property type="entry name" value="Homeodomain-like_sf"/>
</dbReference>
<dbReference type="InterPro" id="IPR050109">
    <property type="entry name" value="HTH-type_TetR-like_transc_reg"/>
</dbReference>
<dbReference type="InterPro" id="IPR001647">
    <property type="entry name" value="HTH_TetR"/>
</dbReference>
<dbReference type="InterPro" id="IPR036271">
    <property type="entry name" value="Tet_transcr_reg_TetR-rel_C_sf"/>
</dbReference>
<dbReference type="InterPro" id="IPR017757">
    <property type="entry name" value="Tscrpt_rep_BetI"/>
</dbReference>
<dbReference type="NCBIfam" id="TIGR03384">
    <property type="entry name" value="betaine_BetI"/>
    <property type="match status" value="1"/>
</dbReference>
<dbReference type="NCBIfam" id="NF001978">
    <property type="entry name" value="PRK00767.1"/>
    <property type="match status" value="1"/>
</dbReference>
<dbReference type="PANTHER" id="PTHR30055:SF234">
    <property type="entry name" value="HTH-TYPE TRANSCRIPTIONAL REGULATOR BETI"/>
    <property type="match status" value="1"/>
</dbReference>
<dbReference type="PANTHER" id="PTHR30055">
    <property type="entry name" value="HTH-TYPE TRANSCRIPTIONAL REGULATOR RUTR"/>
    <property type="match status" value="1"/>
</dbReference>
<dbReference type="Pfam" id="PF13977">
    <property type="entry name" value="TetR_C_6"/>
    <property type="match status" value="1"/>
</dbReference>
<dbReference type="Pfam" id="PF00440">
    <property type="entry name" value="TetR_N"/>
    <property type="match status" value="1"/>
</dbReference>
<dbReference type="SUPFAM" id="SSF46689">
    <property type="entry name" value="Homeodomain-like"/>
    <property type="match status" value="1"/>
</dbReference>
<dbReference type="SUPFAM" id="SSF48498">
    <property type="entry name" value="Tetracyclin repressor-like, C-terminal domain"/>
    <property type="match status" value="1"/>
</dbReference>
<dbReference type="PROSITE" id="PS01081">
    <property type="entry name" value="HTH_TETR_1"/>
    <property type="match status" value="1"/>
</dbReference>
<dbReference type="PROSITE" id="PS50977">
    <property type="entry name" value="HTH_TETR_2"/>
    <property type="match status" value="1"/>
</dbReference>
<gene>
    <name evidence="2" type="primary">betI</name>
    <name type="ordered locus">BamMC406_5035</name>
</gene>
<organism>
    <name type="scientific">Burkholderia ambifaria (strain MC40-6)</name>
    <dbReference type="NCBI Taxonomy" id="398577"/>
    <lineage>
        <taxon>Bacteria</taxon>
        <taxon>Pseudomonadati</taxon>
        <taxon>Pseudomonadota</taxon>
        <taxon>Betaproteobacteria</taxon>
        <taxon>Burkholderiales</taxon>
        <taxon>Burkholderiaceae</taxon>
        <taxon>Burkholderia</taxon>
        <taxon>Burkholderia cepacia complex</taxon>
    </lineage>
</organism>
<accession>B1Z032</accession>
<comment type="function">
    <text evidence="1">Repressor involved in the biosynthesis of the osmoprotectant glycine betaine. It represses transcription of the choline transporter BetT and the genes of BetAB involved in the synthesis of glycine betaine (By similarity).</text>
</comment>
<comment type="pathway">
    <text>Amine and polyamine biosynthesis; betaine biosynthesis via choline pathway [regulation].</text>
</comment>
<feature type="chain" id="PRO_1000133652" description="HTH-type transcriptional regulator BetI">
    <location>
        <begin position="1"/>
        <end position="194"/>
    </location>
</feature>
<feature type="domain" description="HTH tetR-type" evidence="2">
    <location>
        <begin position="8"/>
        <end position="68"/>
    </location>
</feature>
<feature type="DNA-binding region" description="H-T-H motif" evidence="2">
    <location>
        <begin position="31"/>
        <end position="50"/>
    </location>
</feature>
<name>BETI_BURA4</name>
<reference key="1">
    <citation type="submission" date="2008-04" db="EMBL/GenBank/DDBJ databases">
        <title>Complete sequence of chromosome 2 of Burkholderia ambifaria MC40-6.</title>
        <authorList>
            <person name="Copeland A."/>
            <person name="Lucas S."/>
            <person name="Lapidus A."/>
            <person name="Glavina del Rio T."/>
            <person name="Dalin E."/>
            <person name="Tice H."/>
            <person name="Pitluck S."/>
            <person name="Chain P."/>
            <person name="Malfatti S."/>
            <person name="Shin M."/>
            <person name="Vergez L."/>
            <person name="Lang D."/>
            <person name="Schmutz J."/>
            <person name="Larimer F."/>
            <person name="Land M."/>
            <person name="Hauser L."/>
            <person name="Kyrpides N."/>
            <person name="Lykidis A."/>
            <person name="Ramette A."/>
            <person name="Konstantinidis K."/>
            <person name="Tiedje J."/>
            <person name="Richardson P."/>
        </authorList>
    </citation>
    <scope>NUCLEOTIDE SEQUENCE [LARGE SCALE GENOMIC DNA]</scope>
    <source>
        <strain>MC40-6</strain>
    </source>
</reference>